<gene>
    <name evidence="1" type="primary">rnhB</name>
    <name type="ordered locus">HSM_0258</name>
</gene>
<comment type="function">
    <text evidence="1">Endonuclease that specifically degrades the RNA of RNA-DNA hybrids.</text>
</comment>
<comment type="catalytic activity">
    <reaction evidence="1">
        <text>Endonucleolytic cleavage to 5'-phosphomonoester.</text>
        <dbReference type="EC" id="3.1.26.4"/>
    </reaction>
</comment>
<comment type="cofactor">
    <cofactor evidence="1">
        <name>Mn(2+)</name>
        <dbReference type="ChEBI" id="CHEBI:29035"/>
    </cofactor>
    <cofactor evidence="1">
        <name>Mg(2+)</name>
        <dbReference type="ChEBI" id="CHEBI:18420"/>
    </cofactor>
    <text evidence="1">Manganese or magnesium. Binds 1 divalent metal ion per monomer in the absence of substrate. May bind a second metal ion after substrate binding.</text>
</comment>
<comment type="subcellular location">
    <subcellularLocation>
        <location evidence="1">Cytoplasm</location>
    </subcellularLocation>
</comment>
<comment type="similarity">
    <text evidence="1">Belongs to the RNase HII family.</text>
</comment>
<protein>
    <recommendedName>
        <fullName evidence="1">Ribonuclease HII</fullName>
        <shortName evidence="1">RNase HII</shortName>
        <ecNumber evidence="1">3.1.26.4</ecNumber>
    </recommendedName>
</protein>
<name>RNH2_HISS2</name>
<dbReference type="EC" id="3.1.26.4" evidence="1"/>
<dbReference type="EMBL" id="CP000947">
    <property type="protein sequence ID" value="ACA31885.1"/>
    <property type="molecule type" value="Genomic_DNA"/>
</dbReference>
<dbReference type="RefSeq" id="WP_012341128.1">
    <property type="nucleotide sequence ID" value="NC_010519.1"/>
</dbReference>
<dbReference type="SMR" id="B0UW63"/>
<dbReference type="STRING" id="228400.HSM_0258"/>
<dbReference type="GeneID" id="31486538"/>
<dbReference type="KEGG" id="hsm:HSM_0258"/>
<dbReference type="HOGENOM" id="CLU_036532_3_2_6"/>
<dbReference type="GO" id="GO:0005737">
    <property type="term" value="C:cytoplasm"/>
    <property type="evidence" value="ECO:0007669"/>
    <property type="project" value="UniProtKB-SubCell"/>
</dbReference>
<dbReference type="GO" id="GO:0032299">
    <property type="term" value="C:ribonuclease H2 complex"/>
    <property type="evidence" value="ECO:0007669"/>
    <property type="project" value="TreeGrafter"/>
</dbReference>
<dbReference type="GO" id="GO:0030145">
    <property type="term" value="F:manganese ion binding"/>
    <property type="evidence" value="ECO:0007669"/>
    <property type="project" value="UniProtKB-UniRule"/>
</dbReference>
<dbReference type="GO" id="GO:0003723">
    <property type="term" value="F:RNA binding"/>
    <property type="evidence" value="ECO:0007669"/>
    <property type="project" value="InterPro"/>
</dbReference>
<dbReference type="GO" id="GO:0004523">
    <property type="term" value="F:RNA-DNA hybrid ribonuclease activity"/>
    <property type="evidence" value="ECO:0007669"/>
    <property type="project" value="UniProtKB-UniRule"/>
</dbReference>
<dbReference type="GO" id="GO:0043137">
    <property type="term" value="P:DNA replication, removal of RNA primer"/>
    <property type="evidence" value="ECO:0007669"/>
    <property type="project" value="TreeGrafter"/>
</dbReference>
<dbReference type="GO" id="GO:0006298">
    <property type="term" value="P:mismatch repair"/>
    <property type="evidence" value="ECO:0007669"/>
    <property type="project" value="TreeGrafter"/>
</dbReference>
<dbReference type="CDD" id="cd07182">
    <property type="entry name" value="RNase_HII_bacteria_HII_like"/>
    <property type="match status" value="1"/>
</dbReference>
<dbReference type="FunFam" id="3.30.420.10:FF:000006">
    <property type="entry name" value="Ribonuclease HII"/>
    <property type="match status" value="1"/>
</dbReference>
<dbReference type="Gene3D" id="3.30.420.10">
    <property type="entry name" value="Ribonuclease H-like superfamily/Ribonuclease H"/>
    <property type="match status" value="1"/>
</dbReference>
<dbReference type="HAMAP" id="MF_00052_B">
    <property type="entry name" value="RNase_HII_B"/>
    <property type="match status" value="1"/>
</dbReference>
<dbReference type="InterPro" id="IPR022898">
    <property type="entry name" value="RNase_HII"/>
</dbReference>
<dbReference type="InterPro" id="IPR001352">
    <property type="entry name" value="RNase_HII/HIII"/>
</dbReference>
<dbReference type="InterPro" id="IPR024567">
    <property type="entry name" value="RNase_HII/HIII_dom"/>
</dbReference>
<dbReference type="InterPro" id="IPR012337">
    <property type="entry name" value="RNaseH-like_sf"/>
</dbReference>
<dbReference type="InterPro" id="IPR036397">
    <property type="entry name" value="RNaseH_sf"/>
</dbReference>
<dbReference type="NCBIfam" id="NF000594">
    <property type="entry name" value="PRK00015.1-1"/>
    <property type="match status" value="1"/>
</dbReference>
<dbReference type="NCBIfam" id="NF000595">
    <property type="entry name" value="PRK00015.1-3"/>
    <property type="match status" value="1"/>
</dbReference>
<dbReference type="NCBIfam" id="NF000596">
    <property type="entry name" value="PRK00015.1-4"/>
    <property type="match status" value="1"/>
</dbReference>
<dbReference type="PANTHER" id="PTHR10954">
    <property type="entry name" value="RIBONUCLEASE H2 SUBUNIT A"/>
    <property type="match status" value="1"/>
</dbReference>
<dbReference type="PANTHER" id="PTHR10954:SF18">
    <property type="entry name" value="RIBONUCLEASE HII"/>
    <property type="match status" value="1"/>
</dbReference>
<dbReference type="Pfam" id="PF01351">
    <property type="entry name" value="RNase_HII"/>
    <property type="match status" value="1"/>
</dbReference>
<dbReference type="SUPFAM" id="SSF53098">
    <property type="entry name" value="Ribonuclease H-like"/>
    <property type="match status" value="1"/>
</dbReference>
<dbReference type="PROSITE" id="PS51975">
    <property type="entry name" value="RNASE_H_2"/>
    <property type="match status" value="1"/>
</dbReference>
<reference key="1">
    <citation type="submission" date="2008-02" db="EMBL/GenBank/DDBJ databases">
        <title>Complete sequence of Haemophilus somnus 2336.</title>
        <authorList>
            <consortium name="US DOE Joint Genome Institute"/>
            <person name="Siddaramappa S."/>
            <person name="Duncan A.J."/>
            <person name="Challacombe J.F."/>
            <person name="Rainey D."/>
            <person name="Gillaspy A.F."/>
            <person name="Carson M."/>
            <person name="Gipson J."/>
            <person name="Gipson M."/>
            <person name="Bruce D."/>
            <person name="Detter J.C."/>
            <person name="Han C.S."/>
            <person name="Land M."/>
            <person name="Tapia R."/>
            <person name="Thompson L.S."/>
            <person name="Orvis J."/>
            <person name="Zaitshik J."/>
            <person name="Barnes G."/>
            <person name="Brettin T.S."/>
            <person name="Dyer D.W."/>
            <person name="Inzana T.J."/>
        </authorList>
    </citation>
    <scope>NUCLEOTIDE SEQUENCE [LARGE SCALE GENOMIC DNA]</scope>
    <source>
        <strain>2336</strain>
    </source>
</reference>
<proteinExistence type="inferred from homology"/>
<accession>B0UW63</accession>
<keyword id="KW-0963">Cytoplasm</keyword>
<keyword id="KW-0255">Endonuclease</keyword>
<keyword id="KW-0378">Hydrolase</keyword>
<keyword id="KW-0464">Manganese</keyword>
<keyword id="KW-0479">Metal-binding</keyword>
<keyword id="KW-0540">Nuclease</keyword>
<evidence type="ECO:0000255" key="1">
    <source>
        <dbReference type="HAMAP-Rule" id="MF_00052"/>
    </source>
</evidence>
<evidence type="ECO:0000255" key="2">
    <source>
        <dbReference type="PROSITE-ProRule" id="PRU01319"/>
    </source>
</evidence>
<organism>
    <name type="scientific">Histophilus somni (strain 2336)</name>
    <name type="common">Haemophilus somnus</name>
    <dbReference type="NCBI Taxonomy" id="228400"/>
    <lineage>
        <taxon>Bacteria</taxon>
        <taxon>Pseudomonadati</taxon>
        <taxon>Pseudomonadota</taxon>
        <taxon>Gammaproteobacteria</taxon>
        <taxon>Pasteurellales</taxon>
        <taxon>Pasteurellaceae</taxon>
        <taxon>Histophilus</taxon>
    </lineage>
</organism>
<feature type="chain" id="PRO_1000074925" description="Ribonuclease HII">
    <location>
        <begin position="1"/>
        <end position="211"/>
    </location>
</feature>
<feature type="domain" description="RNase H type-2" evidence="2">
    <location>
        <begin position="11"/>
        <end position="200"/>
    </location>
</feature>
<feature type="binding site" evidence="1">
    <location>
        <position position="17"/>
    </location>
    <ligand>
        <name>a divalent metal cation</name>
        <dbReference type="ChEBI" id="CHEBI:60240"/>
    </ligand>
</feature>
<feature type="binding site" evidence="1">
    <location>
        <position position="18"/>
    </location>
    <ligand>
        <name>a divalent metal cation</name>
        <dbReference type="ChEBI" id="CHEBI:60240"/>
    </ligand>
</feature>
<feature type="binding site" evidence="1">
    <location>
        <position position="109"/>
    </location>
    <ligand>
        <name>a divalent metal cation</name>
        <dbReference type="ChEBI" id="CHEBI:60240"/>
    </ligand>
</feature>
<sequence length="211" mass="23615">MTNVFIYPNVEFIAGVDEVGRGPLVGAVVTAAVILDPHNPIEGLKDSKKLSEKKRLLLAEEIKQKALAWSLGRAEPAEIDKLNILHATMLAMQRAVENLKIQPHFVLVDGNRIPQLPMSAQAVIKGDSLVAEISAASILAKVARDQEMIELDRRYPEYAFAQHKGYPTKLHLERLAQFGVLPEYRRSFAPVKKLLSTLLSKNHEYVFKIQK</sequence>